<organism>
    <name type="scientific">Desulfatibacillum aliphaticivorans</name>
    <dbReference type="NCBI Taxonomy" id="218208"/>
    <lineage>
        <taxon>Bacteria</taxon>
        <taxon>Pseudomonadati</taxon>
        <taxon>Thermodesulfobacteriota</taxon>
        <taxon>Desulfobacteria</taxon>
        <taxon>Desulfobacterales</taxon>
        <taxon>Desulfatibacillaceae</taxon>
        <taxon>Desulfatibacillum</taxon>
    </lineage>
</organism>
<dbReference type="EC" id="2.1.1.166" evidence="1"/>
<dbReference type="EMBL" id="CP001322">
    <property type="protein sequence ID" value="ACL04647.1"/>
    <property type="molecule type" value="Genomic_DNA"/>
</dbReference>
<dbReference type="RefSeq" id="WP_015947716.1">
    <property type="nucleotide sequence ID" value="NC_011768.1"/>
</dbReference>
<dbReference type="SMR" id="B8FL12"/>
<dbReference type="KEGG" id="dal:Dalk_2957"/>
<dbReference type="eggNOG" id="COG0293">
    <property type="taxonomic scope" value="Bacteria"/>
</dbReference>
<dbReference type="HOGENOM" id="CLU_009422_4_0_7"/>
<dbReference type="Proteomes" id="UP000000739">
    <property type="component" value="Chromosome"/>
</dbReference>
<dbReference type="GO" id="GO:0005737">
    <property type="term" value="C:cytoplasm"/>
    <property type="evidence" value="ECO:0007669"/>
    <property type="project" value="UniProtKB-SubCell"/>
</dbReference>
<dbReference type="GO" id="GO:0008650">
    <property type="term" value="F:rRNA (uridine-2'-O-)-methyltransferase activity"/>
    <property type="evidence" value="ECO:0007669"/>
    <property type="project" value="UniProtKB-UniRule"/>
</dbReference>
<dbReference type="CDD" id="cd02440">
    <property type="entry name" value="AdoMet_MTases"/>
    <property type="match status" value="1"/>
</dbReference>
<dbReference type="Gene3D" id="3.40.50.150">
    <property type="entry name" value="Vaccinia Virus protein VP39"/>
    <property type="match status" value="1"/>
</dbReference>
<dbReference type="HAMAP" id="MF_01547">
    <property type="entry name" value="RNA_methyltr_E"/>
    <property type="match status" value="1"/>
</dbReference>
<dbReference type="InterPro" id="IPR050082">
    <property type="entry name" value="RNA_methyltr_RlmE"/>
</dbReference>
<dbReference type="InterPro" id="IPR002877">
    <property type="entry name" value="RNA_MeTrfase_FtsJ_dom"/>
</dbReference>
<dbReference type="InterPro" id="IPR015507">
    <property type="entry name" value="rRNA-MeTfrase_E"/>
</dbReference>
<dbReference type="InterPro" id="IPR029063">
    <property type="entry name" value="SAM-dependent_MTases_sf"/>
</dbReference>
<dbReference type="PANTHER" id="PTHR10920">
    <property type="entry name" value="RIBOSOMAL RNA METHYLTRANSFERASE"/>
    <property type="match status" value="1"/>
</dbReference>
<dbReference type="PANTHER" id="PTHR10920:SF18">
    <property type="entry name" value="RRNA METHYLTRANSFERASE 2, MITOCHONDRIAL"/>
    <property type="match status" value="1"/>
</dbReference>
<dbReference type="Pfam" id="PF01728">
    <property type="entry name" value="FtsJ"/>
    <property type="match status" value="1"/>
</dbReference>
<dbReference type="PIRSF" id="PIRSF005461">
    <property type="entry name" value="23S_rRNA_mtase"/>
    <property type="match status" value="1"/>
</dbReference>
<dbReference type="SUPFAM" id="SSF53335">
    <property type="entry name" value="S-adenosyl-L-methionine-dependent methyltransferases"/>
    <property type="match status" value="1"/>
</dbReference>
<proteinExistence type="inferred from homology"/>
<sequence length="207" mass="23116">MKSKKKGKNLWRDHYTDKAQKAGFPARSVFKLEEMQKRWKILRPGQKVLDLGCAPGSWLKYASQIVGDSGRVIGLDLKPMDQPDKPNAQFIQGDAFELTQEFLDEIGRDFDVVLSDMAPNTTGIKNVDALKSAALCESALAAAVTVLKPGGSFVCKIFQGEGFDAFIKDVKKYFTKHKIFKPESTRKQSREIYVVGWSKKGGSHVRT</sequence>
<keyword id="KW-0963">Cytoplasm</keyword>
<keyword id="KW-0489">Methyltransferase</keyword>
<keyword id="KW-1185">Reference proteome</keyword>
<keyword id="KW-0698">rRNA processing</keyword>
<keyword id="KW-0949">S-adenosyl-L-methionine</keyword>
<keyword id="KW-0808">Transferase</keyword>
<gene>
    <name evidence="1" type="primary">rlmE</name>
    <name evidence="1" type="synonym">ftsJ</name>
    <name evidence="1" type="synonym">rrmJ</name>
    <name type="ordered locus">Dalk_2957</name>
</gene>
<evidence type="ECO:0000255" key="1">
    <source>
        <dbReference type="HAMAP-Rule" id="MF_01547"/>
    </source>
</evidence>
<feature type="chain" id="PRO_1000185292" description="Ribosomal RNA large subunit methyltransferase E">
    <location>
        <begin position="1"/>
        <end position="207"/>
    </location>
</feature>
<feature type="active site" description="Proton acceptor" evidence="1">
    <location>
        <position position="156"/>
    </location>
</feature>
<feature type="binding site" evidence="1">
    <location>
        <position position="56"/>
    </location>
    <ligand>
        <name>S-adenosyl-L-methionine</name>
        <dbReference type="ChEBI" id="CHEBI:59789"/>
    </ligand>
</feature>
<feature type="binding site" evidence="1">
    <location>
        <position position="58"/>
    </location>
    <ligand>
        <name>S-adenosyl-L-methionine</name>
        <dbReference type="ChEBI" id="CHEBI:59789"/>
    </ligand>
</feature>
<feature type="binding site" evidence="1">
    <location>
        <position position="76"/>
    </location>
    <ligand>
        <name>S-adenosyl-L-methionine</name>
        <dbReference type="ChEBI" id="CHEBI:59789"/>
    </ligand>
</feature>
<feature type="binding site" evidence="1">
    <location>
        <position position="94"/>
    </location>
    <ligand>
        <name>S-adenosyl-L-methionine</name>
        <dbReference type="ChEBI" id="CHEBI:59789"/>
    </ligand>
</feature>
<feature type="binding site" evidence="1">
    <location>
        <position position="116"/>
    </location>
    <ligand>
        <name>S-adenosyl-L-methionine</name>
        <dbReference type="ChEBI" id="CHEBI:59789"/>
    </ligand>
</feature>
<reference key="1">
    <citation type="journal article" date="2012" name="Environ. Microbiol.">
        <title>The genome sequence of Desulfatibacillum alkenivorans AK-01: a blueprint for anaerobic alkane oxidation.</title>
        <authorList>
            <person name="Callaghan A.V."/>
            <person name="Morris B.E."/>
            <person name="Pereira I.A."/>
            <person name="McInerney M.J."/>
            <person name="Austin R.N."/>
            <person name="Groves J.T."/>
            <person name="Kukor J.J."/>
            <person name="Suflita J.M."/>
            <person name="Young L.Y."/>
            <person name="Zylstra G.J."/>
            <person name="Wawrik B."/>
        </authorList>
    </citation>
    <scope>NUCLEOTIDE SEQUENCE [LARGE SCALE GENOMIC DNA]</scope>
    <source>
        <strain>AK-01</strain>
    </source>
</reference>
<name>RLME_DESAL</name>
<comment type="function">
    <text evidence="1">Specifically methylates the uridine in position 2552 of 23S rRNA at the 2'-O position of the ribose in the fully assembled 50S ribosomal subunit.</text>
</comment>
<comment type="catalytic activity">
    <reaction evidence="1">
        <text>uridine(2552) in 23S rRNA + S-adenosyl-L-methionine = 2'-O-methyluridine(2552) in 23S rRNA + S-adenosyl-L-homocysteine + H(+)</text>
        <dbReference type="Rhea" id="RHEA:42720"/>
        <dbReference type="Rhea" id="RHEA-COMP:10202"/>
        <dbReference type="Rhea" id="RHEA-COMP:10203"/>
        <dbReference type="ChEBI" id="CHEBI:15378"/>
        <dbReference type="ChEBI" id="CHEBI:57856"/>
        <dbReference type="ChEBI" id="CHEBI:59789"/>
        <dbReference type="ChEBI" id="CHEBI:65315"/>
        <dbReference type="ChEBI" id="CHEBI:74478"/>
        <dbReference type="EC" id="2.1.1.166"/>
    </reaction>
</comment>
<comment type="subcellular location">
    <subcellularLocation>
        <location evidence="1">Cytoplasm</location>
    </subcellularLocation>
</comment>
<comment type="similarity">
    <text evidence="1">Belongs to the class I-like SAM-binding methyltransferase superfamily. RNA methyltransferase RlmE family.</text>
</comment>
<protein>
    <recommendedName>
        <fullName evidence="1">Ribosomal RNA large subunit methyltransferase E</fullName>
        <ecNumber evidence="1">2.1.1.166</ecNumber>
    </recommendedName>
    <alternativeName>
        <fullName evidence="1">23S rRNA Um2552 methyltransferase</fullName>
    </alternativeName>
    <alternativeName>
        <fullName evidence="1">rRNA (uridine-2'-O-)-methyltransferase</fullName>
    </alternativeName>
</protein>
<accession>B8FL12</accession>